<gene>
    <name evidence="1" type="primary">rpoA</name>
    <name type="ordered locus">MG177</name>
</gene>
<evidence type="ECO:0000255" key="1">
    <source>
        <dbReference type="HAMAP-Rule" id="MF_00059"/>
    </source>
</evidence>
<proteinExistence type="inferred from homology"/>
<feature type="chain" id="PRO_0000175336" description="DNA-directed RNA polymerase subunit alpha">
    <location>
        <begin position="1"/>
        <end position="328"/>
    </location>
</feature>
<feature type="region of interest" description="Alpha N-terminal domain (alpha-NTD)" evidence="1">
    <location>
        <begin position="1"/>
        <end position="244"/>
    </location>
</feature>
<feature type="region of interest" description="Alpha C-terminal domain (alpha-CTD)" evidence="1">
    <location>
        <begin position="261"/>
        <end position="328"/>
    </location>
</feature>
<name>RPOA_MYCGE</name>
<organism>
    <name type="scientific">Mycoplasma genitalium (strain ATCC 33530 / DSM 19775 / NCTC 10195 / G37)</name>
    <name type="common">Mycoplasmoides genitalium</name>
    <dbReference type="NCBI Taxonomy" id="243273"/>
    <lineage>
        <taxon>Bacteria</taxon>
        <taxon>Bacillati</taxon>
        <taxon>Mycoplasmatota</taxon>
        <taxon>Mycoplasmoidales</taxon>
        <taxon>Mycoplasmoidaceae</taxon>
        <taxon>Mycoplasmoides</taxon>
    </lineage>
</organism>
<keyword id="KW-0240">DNA-directed RNA polymerase</keyword>
<keyword id="KW-0548">Nucleotidyltransferase</keyword>
<keyword id="KW-1185">Reference proteome</keyword>
<keyword id="KW-0804">Transcription</keyword>
<keyword id="KW-0808">Transferase</keyword>
<dbReference type="EC" id="2.7.7.6" evidence="1"/>
<dbReference type="EMBL" id="L43967">
    <property type="protein sequence ID" value="AAC71396.1"/>
    <property type="molecule type" value="Genomic_DNA"/>
</dbReference>
<dbReference type="PIR" id="F64219">
    <property type="entry name" value="F64219"/>
</dbReference>
<dbReference type="RefSeq" id="WP_009885862.1">
    <property type="nucleotide sequence ID" value="NC_000908.2"/>
</dbReference>
<dbReference type="SMR" id="P47423"/>
<dbReference type="FunCoup" id="P47423">
    <property type="interactions" value="166"/>
</dbReference>
<dbReference type="STRING" id="243273.MG_177"/>
<dbReference type="GeneID" id="88282309"/>
<dbReference type="KEGG" id="mge:MG_177"/>
<dbReference type="eggNOG" id="COG0202">
    <property type="taxonomic scope" value="Bacteria"/>
</dbReference>
<dbReference type="HOGENOM" id="CLU_053084_0_1_14"/>
<dbReference type="InParanoid" id="P47423"/>
<dbReference type="OrthoDB" id="9805706at2"/>
<dbReference type="BioCyc" id="MGEN243273:G1GJ2-201-MONOMER"/>
<dbReference type="Proteomes" id="UP000000807">
    <property type="component" value="Chromosome"/>
</dbReference>
<dbReference type="GO" id="GO:0005737">
    <property type="term" value="C:cytoplasm"/>
    <property type="evidence" value="ECO:0000318"/>
    <property type="project" value="GO_Central"/>
</dbReference>
<dbReference type="GO" id="GO:0000428">
    <property type="term" value="C:DNA-directed RNA polymerase complex"/>
    <property type="evidence" value="ECO:0007669"/>
    <property type="project" value="UniProtKB-KW"/>
</dbReference>
<dbReference type="GO" id="GO:0003677">
    <property type="term" value="F:DNA binding"/>
    <property type="evidence" value="ECO:0007669"/>
    <property type="project" value="UniProtKB-UniRule"/>
</dbReference>
<dbReference type="GO" id="GO:0003899">
    <property type="term" value="F:DNA-directed RNA polymerase activity"/>
    <property type="evidence" value="ECO:0007669"/>
    <property type="project" value="UniProtKB-UniRule"/>
</dbReference>
<dbReference type="GO" id="GO:0046983">
    <property type="term" value="F:protein dimerization activity"/>
    <property type="evidence" value="ECO:0007669"/>
    <property type="project" value="InterPro"/>
</dbReference>
<dbReference type="GO" id="GO:0006351">
    <property type="term" value="P:DNA-templated transcription"/>
    <property type="evidence" value="ECO:0007669"/>
    <property type="project" value="UniProtKB-UniRule"/>
</dbReference>
<dbReference type="CDD" id="cd06928">
    <property type="entry name" value="RNAP_alpha_NTD"/>
    <property type="match status" value="1"/>
</dbReference>
<dbReference type="Gene3D" id="1.10.150.20">
    <property type="entry name" value="5' to 3' exonuclease, C-terminal subdomain"/>
    <property type="match status" value="1"/>
</dbReference>
<dbReference type="Gene3D" id="2.170.120.12">
    <property type="entry name" value="DNA-directed RNA polymerase, insert domain"/>
    <property type="match status" value="1"/>
</dbReference>
<dbReference type="Gene3D" id="3.30.1360.10">
    <property type="entry name" value="RNA polymerase, RBP11-like subunit"/>
    <property type="match status" value="1"/>
</dbReference>
<dbReference type="HAMAP" id="MF_00059">
    <property type="entry name" value="RNApol_bact_RpoA"/>
    <property type="match status" value="1"/>
</dbReference>
<dbReference type="InterPro" id="IPR011262">
    <property type="entry name" value="DNA-dir_RNA_pol_insert"/>
</dbReference>
<dbReference type="InterPro" id="IPR011263">
    <property type="entry name" value="DNA-dir_RNA_pol_RpoA/D/Rpb3"/>
</dbReference>
<dbReference type="InterPro" id="IPR011773">
    <property type="entry name" value="DNA-dir_RpoA"/>
</dbReference>
<dbReference type="InterPro" id="IPR036603">
    <property type="entry name" value="RBP11-like"/>
</dbReference>
<dbReference type="InterPro" id="IPR011260">
    <property type="entry name" value="RNAP_asu_C"/>
</dbReference>
<dbReference type="InterPro" id="IPR036643">
    <property type="entry name" value="RNApol_insert_sf"/>
</dbReference>
<dbReference type="NCBIfam" id="NF003519">
    <property type="entry name" value="PRK05182.2-5"/>
    <property type="match status" value="1"/>
</dbReference>
<dbReference type="NCBIfam" id="TIGR02027">
    <property type="entry name" value="rpoA"/>
    <property type="match status" value="1"/>
</dbReference>
<dbReference type="Pfam" id="PF01000">
    <property type="entry name" value="RNA_pol_A_bac"/>
    <property type="match status" value="1"/>
</dbReference>
<dbReference type="Pfam" id="PF03118">
    <property type="entry name" value="RNA_pol_A_CTD"/>
    <property type="match status" value="1"/>
</dbReference>
<dbReference type="Pfam" id="PF01193">
    <property type="entry name" value="RNA_pol_L"/>
    <property type="match status" value="1"/>
</dbReference>
<dbReference type="SMART" id="SM00662">
    <property type="entry name" value="RPOLD"/>
    <property type="match status" value="1"/>
</dbReference>
<dbReference type="SUPFAM" id="SSF47789">
    <property type="entry name" value="C-terminal domain of RNA polymerase alpha subunit"/>
    <property type="match status" value="1"/>
</dbReference>
<dbReference type="SUPFAM" id="SSF56553">
    <property type="entry name" value="Insert subdomain of RNA polymerase alpha subunit"/>
    <property type="match status" value="1"/>
</dbReference>
<dbReference type="SUPFAM" id="SSF55257">
    <property type="entry name" value="RBP11-like subunits of RNA polymerase"/>
    <property type="match status" value="1"/>
</dbReference>
<protein>
    <recommendedName>
        <fullName evidence="1">DNA-directed RNA polymerase subunit alpha</fullName>
        <shortName evidence="1">RNAP subunit alpha</shortName>
        <ecNumber evidence="1">2.7.7.6</ecNumber>
    </recommendedName>
    <alternativeName>
        <fullName evidence="1">RNA polymerase subunit alpha</fullName>
    </alternativeName>
    <alternativeName>
        <fullName evidence="1">Transcriptase subunit alpha</fullName>
    </alternativeName>
</protein>
<comment type="function">
    <text evidence="1">DNA-dependent RNA polymerase catalyzes the transcription of DNA into RNA using the four ribonucleoside triphosphates as substrates.</text>
</comment>
<comment type="catalytic activity">
    <reaction evidence="1">
        <text>RNA(n) + a ribonucleoside 5'-triphosphate = RNA(n+1) + diphosphate</text>
        <dbReference type="Rhea" id="RHEA:21248"/>
        <dbReference type="Rhea" id="RHEA-COMP:14527"/>
        <dbReference type="Rhea" id="RHEA-COMP:17342"/>
        <dbReference type="ChEBI" id="CHEBI:33019"/>
        <dbReference type="ChEBI" id="CHEBI:61557"/>
        <dbReference type="ChEBI" id="CHEBI:140395"/>
        <dbReference type="EC" id="2.7.7.6"/>
    </reaction>
</comment>
<comment type="subunit">
    <text evidence="1">Homodimer. The RNAP catalytic core consists of 2 alpha, 1 beta, 1 beta' and 1 omega subunit. When a sigma factor is associated with the core the holoenzyme is formed, which can initiate transcription.</text>
</comment>
<comment type="domain">
    <text evidence="1">The N-terminal domain is essential for RNAP assembly and basal transcription, whereas the C-terminal domain is involved in interaction with transcriptional regulators and with upstream promoter elements.</text>
</comment>
<comment type="similarity">
    <text evidence="1">Belongs to the RNA polymerase alpha chain family.</text>
</comment>
<accession>P47423</accession>
<sequence>MEKFLKYEIKVNNNQPTNTNPNYGIFEVAPLESGFGITIGNAMRRVLLSCIPGASVFAIAISGVKQEFSNVEGVLEDVTEMVLNFKQLVVRISDLLFEDGEMIEPPLERWPVLKVTAEKKGAVYAKDLECPAGFEVINKDLYLFSLQKDMKLTVSVYVKQGRGFTSFLENRELINSLGIIATDANFSPVLHCGYEVQEVKTSKQKLTDHLTFKIATNGAIKAVDAFAMAAKILIEHLNPIVSVNESIKNLTIIQEKAEERKVKSFAKQIEELDFTVRTFNCLKRSGIHTLQELLSKSLTDIREIRNLGKKSEREIIKKVQELGLKFRS</sequence>
<reference key="1">
    <citation type="journal article" date="1995" name="Science">
        <title>The minimal gene complement of Mycoplasma genitalium.</title>
        <authorList>
            <person name="Fraser C.M."/>
            <person name="Gocayne J.D."/>
            <person name="White O."/>
            <person name="Adams M.D."/>
            <person name="Clayton R.A."/>
            <person name="Fleischmann R.D."/>
            <person name="Bult C.J."/>
            <person name="Kerlavage A.R."/>
            <person name="Sutton G.G."/>
            <person name="Kelley J.M."/>
            <person name="Fritchman J.L."/>
            <person name="Weidman J.F."/>
            <person name="Small K.V."/>
            <person name="Sandusky M."/>
            <person name="Fuhrmann J.L."/>
            <person name="Nguyen D.T."/>
            <person name="Utterback T.R."/>
            <person name="Saudek D.M."/>
            <person name="Phillips C.A."/>
            <person name="Merrick J.M."/>
            <person name="Tomb J.-F."/>
            <person name="Dougherty B.A."/>
            <person name="Bott K.F."/>
            <person name="Hu P.-C."/>
            <person name="Lucier T.S."/>
            <person name="Peterson S.N."/>
            <person name="Smith H.O."/>
            <person name="Hutchison C.A. III"/>
            <person name="Venter J.C."/>
        </authorList>
    </citation>
    <scope>NUCLEOTIDE SEQUENCE [LARGE SCALE GENOMIC DNA]</scope>
    <source>
        <strain>ATCC 33530 / DSM 19775 / NCTC 10195 / G37</strain>
    </source>
</reference>